<evidence type="ECO:0000255" key="1">
    <source>
        <dbReference type="HAMAP-Rule" id="MF_00040"/>
    </source>
</evidence>
<feature type="chain" id="PRO_1000003198" description="Ribosome-recycling factor">
    <location>
        <begin position="1"/>
        <end position="185"/>
    </location>
</feature>
<dbReference type="EMBL" id="CP000479">
    <property type="protein sequence ID" value="ABK65390.1"/>
    <property type="molecule type" value="Genomic_DNA"/>
</dbReference>
<dbReference type="RefSeq" id="WP_003875106.1">
    <property type="nucleotide sequence ID" value="NC_008595.1"/>
</dbReference>
<dbReference type="SMR" id="A0QJ18"/>
<dbReference type="GeneID" id="75271125"/>
<dbReference type="KEGG" id="mav:MAV_3732"/>
<dbReference type="HOGENOM" id="CLU_073981_2_0_11"/>
<dbReference type="Proteomes" id="UP000001574">
    <property type="component" value="Chromosome"/>
</dbReference>
<dbReference type="GO" id="GO:0005737">
    <property type="term" value="C:cytoplasm"/>
    <property type="evidence" value="ECO:0007669"/>
    <property type="project" value="UniProtKB-SubCell"/>
</dbReference>
<dbReference type="GO" id="GO:0043023">
    <property type="term" value="F:ribosomal large subunit binding"/>
    <property type="evidence" value="ECO:0007669"/>
    <property type="project" value="TreeGrafter"/>
</dbReference>
<dbReference type="GO" id="GO:0006415">
    <property type="term" value="P:translational termination"/>
    <property type="evidence" value="ECO:0007669"/>
    <property type="project" value="UniProtKB-UniRule"/>
</dbReference>
<dbReference type="CDD" id="cd00520">
    <property type="entry name" value="RRF"/>
    <property type="match status" value="1"/>
</dbReference>
<dbReference type="FunFam" id="1.10.132.20:FF:000001">
    <property type="entry name" value="Ribosome-recycling factor"/>
    <property type="match status" value="1"/>
</dbReference>
<dbReference type="FunFam" id="3.30.1360.40:FF:000001">
    <property type="entry name" value="Ribosome-recycling factor"/>
    <property type="match status" value="1"/>
</dbReference>
<dbReference type="Gene3D" id="3.30.1360.40">
    <property type="match status" value="1"/>
</dbReference>
<dbReference type="Gene3D" id="1.10.132.20">
    <property type="entry name" value="Ribosome-recycling factor"/>
    <property type="match status" value="1"/>
</dbReference>
<dbReference type="HAMAP" id="MF_00040">
    <property type="entry name" value="RRF"/>
    <property type="match status" value="1"/>
</dbReference>
<dbReference type="InterPro" id="IPR002661">
    <property type="entry name" value="Ribosome_recyc_fac"/>
</dbReference>
<dbReference type="InterPro" id="IPR023584">
    <property type="entry name" value="Ribosome_recyc_fac_dom"/>
</dbReference>
<dbReference type="InterPro" id="IPR036191">
    <property type="entry name" value="RRF_sf"/>
</dbReference>
<dbReference type="NCBIfam" id="TIGR00496">
    <property type="entry name" value="frr"/>
    <property type="match status" value="1"/>
</dbReference>
<dbReference type="PANTHER" id="PTHR20982:SF3">
    <property type="entry name" value="MITOCHONDRIAL RIBOSOME RECYCLING FACTOR PSEUDO 1"/>
    <property type="match status" value="1"/>
</dbReference>
<dbReference type="PANTHER" id="PTHR20982">
    <property type="entry name" value="RIBOSOME RECYCLING FACTOR"/>
    <property type="match status" value="1"/>
</dbReference>
<dbReference type="Pfam" id="PF01765">
    <property type="entry name" value="RRF"/>
    <property type="match status" value="1"/>
</dbReference>
<dbReference type="SUPFAM" id="SSF55194">
    <property type="entry name" value="Ribosome recycling factor, RRF"/>
    <property type="match status" value="1"/>
</dbReference>
<proteinExistence type="inferred from homology"/>
<sequence>MIDEALFDAEEKMEKAVAVARDDLSTIRTGRANPGMFSRIVIDYYGAATPITQLASINVPEARLVVIKPYEASQVGAIETAIRNSDLGVNPTNDGTLIRVAVPQLTEERRRELVKQAKSKGEDAKVSVRNIRRKAMEELHRIRKDGEAGEDEVGRAEKDLDKTTHQYITQIDELVKHKEGELLEV</sequence>
<accession>A0QJ18</accession>
<reference key="1">
    <citation type="submission" date="2006-10" db="EMBL/GenBank/DDBJ databases">
        <authorList>
            <person name="Fleischmann R.D."/>
            <person name="Dodson R.J."/>
            <person name="Haft D.H."/>
            <person name="Merkel J.S."/>
            <person name="Nelson W.C."/>
            <person name="Fraser C.M."/>
        </authorList>
    </citation>
    <scope>NUCLEOTIDE SEQUENCE [LARGE SCALE GENOMIC DNA]</scope>
    <source>
        <strain>104</strain>
    </source>
</reference>
<comment type="function">
    <text evidence="1">Responsible for the release of ribosomes from messenger RNA at the termination of protein biosynthesis. May increase the efficiency of translation by recycling ribosomes from one round of translation to another.</text>
</comment>
<comment type="subcellular location">
    <subcellularLocation>
        <location evidence="1">Cytoplasm</location>
    </subcellularLocation>
</comment>
<comment type="similarity">
    <text evidence="1">Belongs to the RRF family.</text>
</comment>
<protein>
    <recommendedName>
        <fullName evidence="1">Ribosome-recycling factor</fullName>
        <shortName evidence="1">RRF</shortName>
    </recommendedName>
    <alternativeName>
        <fullName evidence="1">Ribosome-releasing factor</fullName>
    </alternativeName>
</protein>
<keyword id="KW-0963">Cytoplasm</keyword>
<keyword id="KW-0648">Protein biosynthesis</keyword>
<gene>
    <name evidence="1" type="primary">frr</name>
    <name type="ordered locus">MAV_3732</name>
</gene>
<name>RRF_MYCA1</name>
<organism>
    <name type="scientific">Mycobacterium avium (strain 104)</name>
    <dbReference type="NCBI Taxonomy" id="243243"/>
    <lineage>
        <taxon>Bacteria</taxon>
        <taxon>Bacillati</taxon>
        <taxon>Actinomycetota</taxon>
        <taxon>Actinomycetes</taxon>
        <taxon>Mycobacteriales</taxon>
        <taxon>Mycobacteriaceae</taxon>
        <taxon>Mycobacterium</taxon>
        <taxon>Mycobacterium avium complex (MAC)</taxon>
    </lineage>
</organism>